<reference key="1">
    <citation type="journal article" date="1996" name="Plant Mol. Biol.">
        <title>Characterization of a maize ribosomal P2 protein cDNA and phylogenetic analysis of the P1/P2 family of ribosomal proteins.</title>
        <authorList>
            <person name="Goddemeier M.L."/>
            <person name="Rensing S.A."/>
            <person name="Feix G."/>
        </authorList>
    </citation>
    <scope>NUCLEOTIDE SEQUENCE [MRNA]</scope>
    <source>
        <strain>cv. RTCS 2</strain>
    </source>
</reference>
<reference key="2">
    <citation type="online journal article" date="1995" name="Plant Gene Register">
        <title>Nucleotide sequence of a maize (Zea mays L.) cDNA coding for a P2-type acidic ribosomal protein.</title>
        <authorList>
            <person name="Vangala S."/>
            <person name="Bailey-Serres J.N."/>
        </authorList>
        <locator>PGR95-064</locator>
    </citation>
    <scope>NUCLEOTIDE SEQUENCE [MRNA]</scope>
    <source>
        <strain>cv. Wisconsin 64A2</strain>
    </source>
</reference>
<reference key="3">
    <citation type="journal article" date="1997" name="Plant Physiol.">
        <title>Acidic phosphoprotein complex of the 60S ribosomal subunit of maize seedling roots. Components and changes in response to flooding.</title>
        <authorList>
            <person name="Bailey-Serres J."/>
            <person name="Vangala S."/>
            <person name="Szick K."/>
            <person name="Lee C.H."/>
        </authorList>
    </citation>
    <scope>PROTEIN SEQUENCE OF 2-12</scope>
    <source>
        <strain>cv. B73</strain>
        <tissue>Ear of corn</tissue>
    </source>
</reference>
<sequence length="112" mass="11363">MKFVAAYLLAVLAGNASPSADDLTAILESVGCEVDNEKMELLLSQLSGKDITELIAAGREKFASVPCGGGGVAVAAAAPAAGGAAPAAEAKKEEKVEEKEESDDDMGFSLFD</sequence>
<keyword id="KW-0903">Direct protein sequencing</keyword>
<keyword id="KW-0597">Phosphoprotein</keyword>
<keyword id="KW-1185">Reference proteome</keyword>
<keyword id="KW-0687">Ribonucleoprotein</keyword>
<keyword id="KW-0689">Ribosomal protein</keyword>
<feature type="initiator methionine" description="Removed" evidence="2">
    <location>
        <position position="1"/>
    </location>
</feature>
<feature type="chain" id="PRO_0000157661" description="Large ribosomal subunit protein P2A">
    <location>
        <begin position="2"/>
        <end position="112"/>
    </location>
</feature>
<feature type="region of interest" description="Disordered" evidence="1">
    <location>
        <begin position="83"/>
        <end position="112"/>
    </location>
</feature>
<feature type="compositionally biased region" description="Basic and acidic residues" evidence="1">
    <location>
        <begin position="89"/>
        <end position="98"/>
    </location>
</feature>
<feature type="sequence conflict" description="In Ref. 3; AA sequence." evidence="3" ref="3">
    <original>F</original>
    <variation>Y</variation>
    <location>
        <position position="3"/>
    </location>
</feature>
<feature type="sequence conflict" description="In Ref. 3; AA sequence." evidence="3" ref="3">
    <original>L</original>
    <variation>V</variation>
    <location>
        <position position="9"/>
    </location>
</feature>
<feature type="sequence conflict" description="In Ref. 2; AAC49360." evidence="3" ref="2">
    <original>A</original>
    <variation>R</variation>
    <location>
        <position position="84"/>
    </location>
</feature>
<protein>
    <recommendedName>
        <fullName evidence="3">Large ribosomal subunit protein P2A</fullName>
    </recommendedName>
    <alternativeName>
        <fullName evidence="3">60S acidic ribosomal protein P2A</fullName>
        <shortName>P2</shortName>
    </alternativeName>
</protein>
<organism>
    <name type="scientific">Zea mays</name>
    <name type="common">Maize</name>
    <dbReference type="NCBI Taxonomy" id="4577"/>
    <lineage>
        <taxon>Eukaryota</taxon>
        <taxon>Viridiplantae</taxon>
        <taxon>Streptophyta</taxon>
        <taxon>Embryophyta</taxon>
        <taxon>Tracheophyta</taxon>
        <taxon>Spermatophyta</taxon>
        <taxon>Magnoliopsida</taxon>
        <taxon>Liliopsida</taxon>
        <taxon>Poales</taxon>
        <taxon>Poaceae</taxon>
        <taxon>PACMAD clade</taxon>
        <taxon>Panicoideae</taxon>
        <taxon>Andropogonodae</taxon>
        <taxon>Andropogoneae</taxon>
        <taxon>Tripsacinae</taxon>
        <taxon>Zea</taxon>
    </lineage>
</organism>
<accession>P46252</accession>
<name>RLA2A_MAIZE</name>
<dbReference type="EMBL" id="X86553">
    <property type="protein sequence ID" value="CAA60251.1"/>
    <property type="molecule type" value="mRNA"/>
</dbReference>
<dbReference type="EMBL" id="U29383">
    <property type="protein sequence ID" value="AAC49360.1"/>
    <property type="molecule type" value="mRNA"/>
</dbReference>
<dbReference type="PIR" id="S65781">
    <property type="entry name" value="S54179"/>
</dbReference>
<dbReference type="SMR" id="P46252"/>
<dbReference type="FunCoup" id="P46252">
    <property type="interactions" value="2079"/>
</dbReference>
<dbReference type="STRING" id="4577.P46252"/>
<dbReference type="PaxDb" id="4577-GRMZM2G119809_P03"/>
<dbReference type="GeneID" id="542323"/>
<dbReference type="KEGG" id="zma:542323"/>
<dbReference type="MaizeGDB" id="84942"/>
<dbReference type="eggNOG" id="KOG3449">
    <property type="taxonomic scope" value="Eukaryota"/>
</dbReference>
<dbReference type="InParanoid" id="P46252"/>
<dbReference type="OrthoDB" id="677125at2759"/>
<dbReference type="Proteomes" id="UP000007305">
    <property type="component" value="Unplaced"/>
</dbReference>
<dbReference type="ExpressionAtlas" id="P46252">
    <property type="expression patterns" value="baseline and differential"/>
</dbReference>
<dbReference type="GO" id="GO:0022625">
    <property type="term" value="C:cytosolic large ribosomal subunit"/>
    <property type="evidence" value="ECO:0000314"/>
    <property type="project" value="AgBase"/>
</dbReference>
<dbReference type="GO" id="GO:0044877">
    <property type="term" value="F:protein-containing complex binding"/>
    <property type="evidence" value="ECO:0000314"/>
    <property type="project" value="AgBase"/>
</dbReference>
<dbReference type="GO" id="GO:0003735">
    <property type="term" value="F:structural constituent of ribosome"/>
    <property type="evidence" value="ECO:0000304"/>
    <property type="project" value="AgBase"/>
</dbReference>
<dbReference type="GO" id="GO:0002182">
    <property type="term" value="P:cytoplasmic translational elongation"/>
    <property type="evidence" value="ECO:0007669"/>
    <property type="project" value="InterPro"/>
</dbReference>
<dbReference type="CDD" id="cd05833">
    <property type="entry name" value="Ribosomal_P2"/>
    <property type="match status" value="1"/>
</dbReference>
<dbReference type="FunFam" id="1.10.10.1410:FF:000002">
    <property type="entry name" value="60S acidic ribosomal protein P2"/>
    <property type="match status" value="1"/>
</dbReference>
<dbReference type="Gene3D" id="1.10.10.1410">
    <property type="match status" value="1"/>
</dbReference>
<dbReference type="HAMAP" id="MF_01478">
    <property type="entry name" value="Ribosomal_L12_arch"/>
    <property type="match status" value="1"/>
</dbReference>
<dbReference type="InterPro" id="IPR038716">
    <property type="entry name" value="P1/P2_N_sf"/>
</dbReference>
<dbReference type="InterPro" id="IPR027534">
    <property type="entry name" value="Ribosomal_P1/P2"/>
</dbReference>
<dbReference type="InterPro" id="IPR044076">
    <property type="entry name" value="Ribosomal_P2"/>
</dbReference>
<dbReference type="PANTHER" id="PTHR21141">
    <property type="entry name" value="60S ACIDIC RIBOSOMAL PROTEIN FAMILY MEMBER"/>
    <property type="match status" value="1"/>
</dbReference>
<dbReference type="PANTHER" id="PTHR21141:SF100">
    <property type="entry name" value="LARGE RIBOSOMAL SUBUNIT PROTEIN P2A"/>
    <property type="match status" value="1"/>
</dbReference>
<dbReference type="Pfam" id="PF00428">
    <property type="entry name" value="Ribosomal_60s"/>
    <property type="match status" value="1"/>
</dbReference>
<evidence type="ECO:0000256" key="1">
    <source>
        <dbReference type="SAM" id="MobiDB-lite"/>
    </source>
</evidence>
<evidence type="ECO:0000269" key="2">
    <source>
    </source>
</evidence>
<evidence type="ECO:0000305" key="3"/>
<comment type="function">
    <text>Plays an important role in the elongation step of protein synthesis.</text>
</comment>
<comment type="subunit">
    <text>P1 and P2 exist as dimers at the large ribosomal subunit.</text>
</comment>
<comment type="PTM">
    <text>Phosphorylated.</text>
</comment>
<comment type="similarity">
    <text evidence="3">Belongs to the eukaryotic ribosomal protein P1/P2 family.</text>
</comment>
<proteinExistence type="evidence at protein level"/>
<gene>
    <name type="primary">RPP2A</name>
    <name type="synonym">RPP2</name>
</gene>